<dbReference type="EMBL" id="AE008384">
    <property type="protein sequence ID" value="AAM30538.1"/>
    <property type="status" value="ALT_INIT"/>
    <property type="molecule type" value="Genomic_DNA"/>
</dbReference>
<dbReference type="SMR" id="Q8PYL9"/>
<dbReference type="KEGG" id="mma:MM_0842"/>
<dbReference type="PATRIC" id="fig|192952.21.peg.997"/>
<dbReference type="eggNOG" id="arCOG01008">
    <property type="taxonomic scope" value="Archaea"/>
</dbReference>
<dbReference type="HOGENOM" id="CLU_113319_1_2_2"/>
<dbReference type="Proteomes" id="UP000000595">
    <property type="component" value="Chromosome"/>
</dbReference>
<dbReference type="GO" id="GO:0003677">
    <property type="term" value="F:DNA binding"/>
    <property type="evidence" value="ECO:0007669"/>
    <property type="project" value="UniProtKB-KW"/>
</dbReference>
<dbReference type="GO" id="GO:0003700">
    <property type="term" value="F:DNA-binding transcription factor activity"/>
    <property type="evidence" value="ECO:0007669"/>
    <property type="project" value="UniProtKB-UniRule"/>
</dbReference>
<dbReference type="GO" id="GO:0016151">
    <property type="term" value="F:nickel cation binding"/>
    <property type="evidence" value="ECO:0007669"/>
    <property type="project" value="UniProtKB-UniRule"/>
</dbReference>
<dbReference type="GO" id="GO:0010045">
    <property type="term" value="P:response to nickel cation"/>
    <property type="evidence" value="ECO:0007669"/>
    <property type="project" value="InterPro"/>
</dbReference>
<dbReference type="CDD" id="cd22231">
    <property type="entry name" value="RHH_NikR_HicB-like"/>
    <property type="match status" value="1"/>
</dbReference>
<dbReference type="Gene3D" id="3.30.70.1150">
    <property type="entry name" value="ACT-like. Chain A, domain 2"/>
    <property type="match status" value="1"/>
</dbReference>
<dbReference type="Gene3D" id="1.10.1220.10">
    <property type="entry name" value="Met repressor-like"/>
    <property type="match status" value="1"/>
</dbReference>
<dbReference type="HAMAP" id="MF_00476">
    <property type="entry name" value="NikR"/>
    <property type="match status" value="1"/>
</dbReference>
<dbReference type="InterPro" id="IPR027271">
    <property type="entry name" value="Acetolactate_synth/TF_NikR_C"/>
</dbReference>
<dbReference type="InterPro" id="IPR045865">
    <property type="entry name" value="ACT-like_dom_sf"/>
</dbReference>
<dbReference type="InterPro" id="IPR013321">
    <property type="entry name" value="Arc_rbn_hlx_hlx"/>
</dbReference>
<dbReference type="InterPro" id="IPR002145">
    <property type="entry name" value="CopG"/>
</dbReference>
<dbReference type="InterPro" id="IPR050192">
    <property type="entry name" value="CopG/NikR_regulator"/>
</dbReference>
<dbReference type="InterPro" id="IPR022988">
    <property type="entry name" value="Ni_resp_reg_NikR"/>
</dbReference>
<dbReference type="InterPro" id="IPR010985">
    <property type="entry name" value="Ribbon_hlx_hlx"/>
</dbReference>
<dbReference type="InterPro" id="IPR014864">
    <property type="entry name" value="TF_NikR_Ni-bd_C"/>
</dbReference>
<dbReference type="NCBIfam" id="NF001884">
    <property type="entry name" value="PRK00630.1"/>
    <property type="match status" value="1"/>
</dbReference>
<dbReference type="NCBIfam" id="NF002169">
    <property type="entry name" value="PRK01002.1"/>
    <property type="match status" value="1"/>
</dbReference>
<dbReference type="NCBIfam" id="NF002815">
    <property type="entry name" value="PRK02967.1"/>
    <property type="match status" value="1"/>
</dbReference>
<dbReference type="NCBIfam" id="NF003381">
    <property type="entry name" value="PRK04460.1"/>
    <property type="match status" value="1"/>
</dbReference>
<dbReference type="PANTHER" id="PTHR34719">
    <property type="entry name" value="NICKEL-RESPONSIVE REGULATOR"/>
    <property type="match status" value="1"/>
</dbReference>
<dbReference type="PANTHER" id="PTHR34719:SF2">
    <property type="entry name" value="NICKEL-RESPONSIVE REGULATOR"/>
    <property type="match status" value="1"/>
</dbReference>
<dbReference type="Pfam" id="PF08753">
    <property type="entry name" value="NikR_C"/>
    <property type="match status" value="1"/>
</dbReference>
<dbReference type="Pfam" id="PF01402">
    <property type="entry name" value="RHH_1"/>
    <property type="match status" value="1"/>
</dbReference>
<dbReference type="SUPFAM" id="SSF55021">
    <property type="entry name" value="ACT-like"/>
    <property type="match status" value="1"/>
</dbReference>
<dbReference type="SUPFAM" id="SSF47598">
    <property type="entry name" value="Ribbon-helix-helix"/>
    <property type="match status" value="1"/>
</dbReference>
<keyword id="KW-0238">DNA-binding</keyword>
<keyword id="KW-0479">Metal-binding</keyword>
<keyword id="KW-0533">Nickel</keyword>
<keyword id="KW-0804">Transcription</keyword>
<keyword id="KW-0805">Transcription regulation</keyword>
<accession>Q8PYL9</accession>
<organism>
    <name type="scientific">Methanosarcina mazei (strain ATCC BAA-159 / DSM 3647 / Goe1 / Go1 / JCM 11833 / OCM 88)</name>
    <name type="common">Methanosarcina frisia</name>
    <dbReference type="NCBI Taxonomy" id="192952"/>
    <lineage>
        <taxon>Archaea</taxon>
        <taxon>Methanobacteriati</taxon>
        <taxon>Methanobacteriota</taxon>
        <taxon>Stenosarchaea group</taxon>
        <taxon>Methanomicrobia</taxon>
        <taxon>Methanosarcinales</taxon>
        <taxon>Methanosarcinaceae</taxon>
        <taxon>Methanosarcina</taxon>
    </lineage>
</organism>
<evidence type="ECO:0000250" key="1"/>
<evidence type="ECO:0000305" key="2"/>
<sequence length="140" mass="15820">METELMRIGVSLPDTLLSKFDEIIEKRGYSSRSEGIRDAIRSYISYYEWMGDIKGHRVGTVAVIYDHTKRGLSNALADIQHHYSHLIKSSVHIHLDHDNCFEVVVLDGDGEEIKELAEAIMSLKGVKFSKLTTVASNEKI</sequence>
<feature type="chain" id="PRO_0000139305" description="Putative nickel-responsive regulator 2">
    <location>
        <begin position="1"/>
        <end position="140"/>
    </location>
</feature>
<feature type="binding site" evidence="1">
    <location>
        <position position="81"/>
    </location>
    <ligand>
        <name>Ni(2+)</name>
        <dbReference type="ChEBI" id="CHEBI:49786"/>
    </ligand>
</feature>
<feature type="binding site" evidence="1">
    <location>
        <position position="92"/>
    </location>
    <ligand>
        <name>Ni(2+)</name>
        <dbReference type="ChEBI" id="CHEBI:49786"/>
    </ligand>
</feature>
<feature type="binding site" evidence="1">
    <location>
        <position position="94"/>
    </location>
    <ligand>
        <name>Ni(2+)</name>
        <dbReference type="ChEBI" id="CHEBI:49786"/>
    </ligand>
</feature>
<feature type="binding site" evidence="1">
    <location>
        <position position="100"/>
    </location>
    <ligand>
        <name>Ni(2+)</name>
        <dbReference type="ChEBI" id="CHEBI:49786"/>
    </ligand>
</feature>
<comment type="function">
    <text evidence="2">Transcriptional regulator.</text>
</comment>
<comment type="cofactor">
    <cofactor evidence="1">
        <name>Ni(2+)</name>
        <dbReference type="ChEBI" id="CHEBI:49786"/>
    </cofactor>
    <text evidence="1">Binds 1 nickel ion per subunit.</text>
</comment>
<comment type="similarity">
    <text evidence="2">Belongs to the transcriptional regulatory CopG/NikR family.</text>
</comment>
<comment type="sequence caution" evidence="2">
    <conflict type="erroneous initiation">
        <sequence resource="EMBL-CDS" id="AAM30538"/>
    </conflict>
</comment>
<name>NIKR2_METMA</name>
<gene>
    <name type="ordered locus">MM_0842</name>
</gene>
<protein>
    <recommendedName>
        <fullName>Putative nickel-responsive regulator 2</fullName>
    </recommendedName>
</protein>
<reference key="1">
    <citation type="journal article" date="2002" name="J. Mol. Microbiol. Biotechnol.">
        <title>The genome of Methanosarcina mazei: evidence for lateral gene transfer between Bacteria and Archaea.</title>
        <authorList>
            <person name="Deppenmeier U."/>
            <person name="Johann A."/>
            <person name="Hartsch T."/>
            <person name="Merkl R."/>
            <person name="Schmitz R.A."/>
            <person name="Martinez-Arias R."/>
            <person name="Henne A."/>
            <person name="Wiezer A."/>
            <person name="Baeumer S."/>
            <person name="Jacobi C."/>
            <person name="Brueggemann H."/>
            <person name="Lienard T."/>
            <person name="Christmann A."/>
            <person name="Boemecke M."/>
            <person name="Steckel S."/>
            <person name="Bhattacharyya A."/>
            <person name="Lykidis A."/>
            <person name="Overbeek R."/>
            <person name="Klenk H.-P."/>
            <person name="Gunsalus R.P."/>
            <person name="Fritz H.-J."/>
            <person name="Gottschalk G."/>
        </authorList>
    </citation>
    <scope>NUCLEOTIDE SEQUENCE [LARGE SCALE GENOMIC DNA]</scope>
    <source>
        <strain>ATCC BAA-159 / DSM 3647 / Goe1 / Go1 / JCM 11833 / OCM 88</strain>
    </source>
</reference>
<proteinExistence type="inferred from homology"/>